<feature type="chain" id="PRO_0000181967" description="Transcription termination/antitermination protein NusA">
    <location>
        <begin position="1"/>
        <end position="495"/>
    </location>
</feature>
<feature type="domain" description="S1 motif" evidence="1">
    <location>
        <begin position="135"/>
        <end position="200"/>
    </location>
</feature>
<feature type="domain" description="KH" evidence="1">
    <location>
        <begin position="302"/>
        <end position="368"/>
    </location>
</feature>
<feature type="repeat" description="1">
    <location>
        <begin position="364"/>
        <end position="414"/>
    </location>
</feature>
<feature type="repeat" description="2">
    <location>
        <begin position="439"/>
        <end position="489"/>
    </location>
</feature>
<feature type="region of interest" description="2 X 51 AA approximate repeats">
    <location>
        <begin position="364"/>
        <end position="489"/>
    </location>
</feature>
<proteinExistence type="inferred from homology"/>
<reference key="1">
    <citation type="journal article" date="2002" name="Proc. Natl. Acad. Sci. U.S.A.">
        <title>Extensive mosaic structure revealed by the complete genome sequence of uropathogenic Escherichia coli.</title>
        <authorList>
            <person name="Welch R.A."/>
            <person name="Burland V."/>
            <person name="Plunkett G. III"/>
            <person name="Redford P."/>
            <person name="Roesch P."/>
            <person name="Rasko D."/>
            <person name="Buckles E.L."/>
            <person name="Liou S.-R."/>
            <person name="Boutin A."/>
            <person name="Hackett J."/>
            <person name="Stroud D."/>
            <person name="Mayhew G.F."/>
            <person name="Rose D.J."/>
            <person name="Zhou S."/>
            <person name="Schwartz D.C."/>
            <person name="Perna N.T."/>
            <person name="Mobley H.L.T."/>
            <person name="Donnenberg M.S."/>
            <person name="Blattner F.R."/>
        </authorList>
    </citation>
    <scope>NUCLEOTIDE SEQUENCE [LARGE SCALE GENOMIC DNA]</scope>
    <source>
        <strain>CFT073 / ATCC 700928 / UPEC</strain>
    </source>
</reference>
<gene>
    <name evidence="1" type="primary">nusA</name>
    <name type="ordered locus">c3926</name>
</gene>
<dbReference type="EMBL" id="AE014075">
    <property type="protein sequence ID" value="AAN82367.1"/>
    <property type="molecule type" value="Genomic_DNA"/>
</dbReference>
<dbReference type="RefSeq" id="WP_001031057.1">
    <property type="nucleotide sequence ID" value="NZ_CP051263.1"/>
</dbReference>
<dbReference type="BMRB" id="P0AFF7"/>
<dbReference type="SMR" id="P0AFF7"/>
<dbReference type="STRING" id="199310.c3926"/>
<dbReference type="GeneID" id="93778814"/>
<dbReference type="KEGG" id="ecc:c3926"/>
<dbReference type="eggNOG" id="COG0195">
    <property type="taxonomic scope" value="Bacteria"/>
</dbReference>
<dbReference type="HOGENOM" id="CLU_029242_0_0_6"/>
<dbReference type="BioCyc" id="ECOL199310:C3926-MONOMER"/>
<dbReference type="Proteomes" id="UP000001410">
    <property type="component" value="Chromosome"/>
</dbReference>
<dbReference type="GO" id="GO:0005829">
    <property type="term" value="C:cytosol"/>
    <property type="evidence" value="ECO:0007669"/>
    <property type="project" value="TreeGrafter"/>
</dbReference>
<dbReference type="GO" id="GO:0003700">
    <property type="term" value="F:DNA-binding transcription factor activity"/>
    <property type="evidence" value="ECO:0007669"/>
    <property type="project" value="InterPro"/>
</dbReference>
<dbReference type="GO" id="GO:0000166">
    <property type="term" value="F:nucleotide binding"/>
    <property type="evidence" value="ECO:0007669"/>
    <property type="project" value="InterPro"/>
</dbReference>
<dbReference type="GO" id="GO:0003723">
    <property type="term" value="F:RNA binding"/>
    <property type="evidence" value="ECO:0007669"/>
    <property type="project" value="UniProtKB-UniRule"/>
</dbReference>
<dbReference type="GO" id="GO:0006353">
    <property type="term" value="P:DNA-templated transcription termination"/>
    <property type="evidence" value="ECO:0007669"/>
    <property type="project" value="UniProtKB-UniRule"/>
</dbReference>
<dbReference type="GO" id="GO:0031564">
    <property type="term" value="P:transcription antitermination"/>
    <property type="evidence" value="ECO:0007669"/>
    <property type="project" value="UniProtKB-UniRule"/>
</dbReference>
<dbReference type="CDD" id="cd02134">
    <property type="entry name" value="KH-II_NusA_rpt1"/>
    <property type="match status" value="1"/>
</dbReference>
<dbReference type="CDD" id="cd22529">
    <property type="entry name" value="KH-II_NusA_rpt2"/>
    <property type="match status" value="1"/>
</dbReference>
<dbReference type="CDD" id="cd04455">
    <property type="entry name" value="S1_NusA"/>
    <property type="match status" value="1"/>
</dbReference>
<dbReference type="FunFam" id="1.10.150.20:FF:000015">
    <property type="entry name" value="Transcription termination/antitermination protein NusA"/>
    <property type="match status" value="1"/>
</dbReference>
<dbReference type="FunFam" id="1.10.150.20:FF:000018">
    <property type="entry name" value="Transcription termination/antitermination protein NusA"/>
    <property type="match status" value="1"/>
</dbReference>
<dbReference type="FunFam" id="2.40.50.140:FF:000092">
    <property type="entry name" value="Transcription termination/antitermination protein NusA"/>
    <property type="match status" value="1"/>
</dbReference>
<dbReference type="FunFam" id="3.30.1480.10:FF:000001">
    <property type="entry name" value="Transcription termination/antitermination protein NusA"/>
    <property type="match status" value="1"/>
</dbReference>
<dbReference type="FunFam" id="3.30.300.20:FF:000002">
    <property type="entry name" value="Transcription termination/antitermination protein NusA"/>
    <property type="match status" value="1"/>
</dbReference>
<dbReference type="FunFam" id="3.30.300.20:FF:000005">
    <property type="entry name" value="Transcription termination/antitermination protein NusA"/>
    <property type="match status" value="1"/>
</dbReference>
<dbReference type="Gene3D" id="3.30.300.20">
    <property type="match status" value="2"/>
</dbReference>
<dbReference type="Gene3D" id="1.10.150.20">
    <property type="entry name" value="5' to 3' exonuclease, C-terminal subdomain"/>
    <property type="match status" value="2"/>
</dbReference>
<dbReference type="Gene3D" id="2.40.50.140">
    <property type="entry name" value="Nucleic acid-binding proteins"/>
    <property type="match status" value="1"/>
</dbReference>
<dbReference type="Gene3D" id="3.30.1480.10">
    <property type="entry name" value="NusA, N-terminal domain"/>
    <property type="match status" value="1"/>
</dbReference>
<dbReference type="HAMAP" id="MF_00945_B">
    <property type="entry name" value="NusA_B"/>
    <property type="match status" value="1"/>
</dbReference>
<dbReference type="InterPro" id="IPR010995">
    <property type="entry name" value="DNA_repair_Rad51/TF_NusA_a-hlx"/>
</dbReference>
<dbReference type="InterPro" id="IPR015946">
    <property type="entry name" value="KH_dom-like_a/b"/>
</dbReference>
<dbReference type="InterPro" id="IPR025249">
    <property type="entry name" value="KH_dom_NusA-like"/>
</dbReference>
<dbReference type="InterPro" id="IPR009019">
    <property type="entry name" value="KH_sf_prok-type"/>
</dbReference>
<dbReference type="InterPro" id="IPR012340">
    <property type="entry name" value="NA-bd_OB-fold"/>
</dbReference>
<dbReference type="InterPro" id="IPR030842">
    <property type="entry name" value="NusA_bac"/>
</dbReference>
<dbReference type="InterPro" id="IPR036555">
    <property type="entry name" value="NusA_N_sf"/>
</dbReference>
<dbReference type="InterPro" id="IPR003029">
    <property type="entry name" value="S1_domain"/>
</dbReference>
<dbReference type="InterPro" id="IPR013735">
    <property type="entry name" value="TF_NusA_N"/>
</dbReference>
<dbReference type="InterPro" id="IPR010214">
    <property type="entry name" value="Tscrpt_termin_fac_NusA_C_rpt"/>
</dbReference>
<dbReference type="InterPro" id="IPR010213">
    <property type="entry name" value="Tscrpt_termination_fac_NusA"/>
</dbReference>
<dbReference type="NCBIfam" id="TIGR01953">
    <property type="entry name" value="NusA"/>
    <property type="match status" value="1"/>
</dbReference>
<dbReference type="NCBIfam" id="TIGR01954">
    <property type="entry name" value="nusA_Cterm_rpt"/>
    <property type="match status" value="2"/>
</dbReference>
<dbReference type="PANTHER" id="PTHR22648">
    <property type="entry name" value="TRANSCRIPTION TERMINATION FACTOR NUSA"/>
    <property type="match status" value="1"/>
</dbReference>
<dbReference type="PANTHER" id="PTHR22648:SF0">
    <property type="entry name" value="TRANSCRIPTION TERMINATION_ANTITERMINATION PROTEIN NUSA"/>
    <property type="match status" value="1"/>
</dbReference>
<dbReference type="Pfam" id="PF14520">
    <property type="entry name" value="HHH_5"/>
    <property type="match status" value="1"/>
</dbReference>
<dbReference type="Pfam" id="PF13184">
    <property type="entry name" value="KH_5"/>
    <property type="match status" value="1"/>
</dbReference>
<dbReference type="Pfam" id="PF08529">
    <property type="entry name" value="NusA_N"/>
    <property type="match status" value="1"/>
</dbReference>
<dbReference type="Pfam" id="PF00575">
    <property type="entry name" value="S1"/>
    <property type="match status" value="1"/>
</dbReference>
<dbReference type="SMART" id="SM00316">
    <property type="entry name" value="S1"/>
    <property type="match status" value="1"/>
</dbReference>
<dbReference type="SUPFAM" id="SSF50249">
    <property type="entry name" value="Nucleic acid-binding proteins"/>
    <property type="match status" value="1"/>
</dbReference>
<dbReference type="SUPFAM" id="SSF54814">
    <property type="entry name" value="Prokaryotic type KH domain (KH-domain type II)"/>
    <property type="match status" value="2"/>
</dbReference>
<dbReference type="SUPFAM" id="SSF47794">
    <property type="entry name" value="Rad51 N-terminal domain-like"/>
    <property type="match status" value="2"/>
</dbReference>
<dbReference type="SUPFAM" id="SSF69705">
    <property type="entry name" value="Transcription factor NusA, N-terminal domain"/>
    <property type="match status" value="1"/>
</dbReference>
<dbReference type="PROSITE" id="PS50084">
    <property type="entry name" value="KH_TYPE_1"/>
    <property type="match status" value="1"/>
</dbReference>
<dbReference type="PROSITE" id="PS50126">
    <property type="entry name" value="S1"/>
    <property type="match status" value="1"/>
</dbReference>
<name>NUSA_ECOL6</name>
<accession>P0AFF7</accession>
<accession>P03003</accession>
<sequence length="495" mass="54871">MNKEILAVVEAVSNEKALPREKIFEALESALATATKKKYEQEIDVRVQIDRKSGDFDTFRRWLVVDEVTQPTKEITLEAARYEDESLNLGDYVEDQIESVTFDRITTQTAKQVIVQKVREAERAMVVDQFREHEGEIITGVVKKVNRDNISLDLGNNAEAVILREDMLPRENFRPGDRVRGVLYSVRPEARGAQLFVTRSKPEMLIELFRIEVPEIGEEVIEIKAAARDPGSRAKIAVKTNDKRIDPVGACVGMRGARVQAVSTELGGERIDIVLWDDNPAQFVINAMAPADVASIVVDEDKHTMDIAVEAGNLAQAIGRNGQNVRLASQLSGWELNVMTVDDLQAKHQAEAHAAIDTFTKYLDIDEDFATVLVEEGFSTLEELAYVPMKELLEIEGLDEPTVEALRERAKNALATIAQAQEESLGDNKPADDLLNLEGVDRDLAFKLAARGVCTLEDLAEQGIDDLADIEGLTDEKAGALIMAARNICWFGDEA</sequence>
<organism>
    <name type="scientific">Escherichia coli O6:H1 (strain CFT073 / ATCC 700928 / UPEC)</name>
    <dbReference type="NCBI Taxonomy" id="199310"/>
    <lineage>
        <taxon>Bacteria</taxon>
        <taxon>Pseudomonadati</taxon>
        <taxon>Pseudomonadota</taxon>
        <taxon>Gammaproteobacteria</taxon>
        <taxon>Enterobacterales</taxon>
        <taxon>Enterobacteriaceae</taxon>
        <taxon>Escherichia</taxon>
    </lineage>
</organism>
<evidence type="ECO:0000255" key="1">
    <source>
        <dbReference type="HAMAP-Rule" id="MF_00945"/>
    </source>
</evidence>
<protein>
    <recommendedName>
        <fullName evidence="1">Transcription termination/antitermination protein NusA</fullName>
    </recommendedName>
</protein>
<comment type="function">
    <text evidence="1">Participates in both transcription termination and antitermination.</text>
</comment>
<comment type="subunit">
    <text evidence="1">Monomer. Binds directly to the core enzyme of the DNA-dependent RNA polymerase and to nascent RNA.</text>
</comment>
<comment type="subcellular location">
    <subcellularLocation>
        <location evidence="1">Cytoplasm</location>
    </subcellularLocation>
</comment>
<comment type="similarity">
    <text evidence="1">Belongs to the NusA family.</text>
</comment>
<keyword id="KW-0963">Cytoplasm</keyword>
<keyword id="KW-1185">Reference proteome</keyword>
<keyword id="KW-0677">Repeat</keyword>
<keyword id="KW-0694">RNA-binding</keyword>
<keyword id="KW-0804">Transcription</keyword>
<keyword id="KW-0889">Transcription antitermination</keyword>
<keyword id="KW-0805">Transcription regulation</keyword>
<keyword id="KW-0806">Transcription termination</keyword>